<keyword id="KW-0687">Ribonucleoprotein</keyword>
<keyword id="KW-0689">Ribosomal protein</keyword>
<comment type="similarity">
    <text evidence="1">Belongs to the eukaryotic ribosomal protein eS26 family.</text>
</comment>
<feature type="chain" id="PRO_0000204517" description="Small ribosomal subunit protein eS26">
    <location>
        <begin position="1"/>
        <end position="83" status="greater than"/>
    </location>
</feature>
<feature type="non-terminal residue">
    <location>
        <position position="83"/>
    </location>
</feature>
<dbReference type="EMBL" id="X82365">
    <property type="protein sequence ID" value="CAA57781.1"/>
    <property type="molecule type" value="mRNA"/>
</dbReference>
<dbReference type="PIR" id="S48840">
    <property type="entry name" value="S48840"/>
</dbReference>
<dbReference type="PIR" id="T50825">
    <property type="entry name" value="T50825"/>
</dbReference>
<dbReference type="SMR" id="P41959"/>
<dbReference type="STRING" id="6280.P41959"/>
<dbReference type="GO" id="GO:0022627">
    <property type="term" value="C:cytosolic small ribosomal subunit"/>
    <property type="evidence" value="ECO:0007669"/>
    <property type="project" value="TreeGrafter"/>
</dbReference>
<dbReference type="GO" id="GO:0003729">
    <property type="term" value="F:mRNA binding"/>
    <property type="evidence" value="ECO:0007669"/>
    <property type="project" value="TreeGrafter"/>
</dbReference>
<dbReference type="GO" id="GO:0003735">
    <property type="term" value="F:structural constituent of ribosome"/>
    <property type="evidence" value="ECO:0007669"/>
    <property type="project" value="InterPro"/>
</dbReference>
<dbReference type="GO" id="GO:0006412">
    <property type="term" value="P:translation"/>
    <property type="evidence" value="ECO:0007669"/>
    <property type="project" value="InterPro"/>
</dbReference>
<dbReference type="FunFam" id="3.30.1740.20:FF:000001">
    <property type="entry name" value="40S ribosomal protein S26"/>
    <property type="match status" value="1"/>
</dbReference>
<dbReference type="Gene3D" id="3.30.1740.20">
    <property type="entry name" value="Ribosomal protein S26e"/>
    <property type="match status" value="1"/>
</dbReference>
<dbReference type="InterPro" id="IPR000892">
    <property type="entry name" value="Ribosomal_eS26"/>
</dbReference>
<dbReference type="InterPro" id="IPR047864">
    <property type="entry name" value="Ribosomal_eS26_CS"/>
</dbReference>
<dbReference type="InterPro" id="IPR038551">
    <property type="entry name" value="Ribosomal_eS26_sf"/>
</dbReference>
<dbReference type="PANTHER" id="PTHR12538">
    <property type="entry name" value="40S RIBOSOMAL PROTEIN S26"/>
    <property type="match status" value="1"/>
</dbReference>
<dbReference type="PANTHER" id="PTHR12538:SF0">
    <property type="entry name" value="40S RIBOSOMAL PROTEIN S26"/>
    <property type="match status" value="1"/>
</dbReference>
<dbReference type="Pfam" id="PF01283">
    <property type="entry name" value="Ribosomal_S26e"/>
    <property type="match status" value="1"/>
</dbReference>
<dbReference type="PROSITE" id="PS00733">
    <property type="entry name" value="RIBOSOMAL_S26E"/>
    <property type="match status" value="1"/>
</dbReference>
<proteinExistence type="evidence at transcript level"/>
<evidence type="ECO:0000305" key="1"/>
<reference key="1">
    <citation type="journal article" date="1995" name="Mol. Biochem. Parasitol.">
        <title>The construction of spliced leader cDNA libraries from the filarial nematode Brugia pahangi.</title>
        <authorList>
            <person name="Martin S.A.M."/>
            <person name="Thompson F.J."/>
            <person name="Devaney E."/>
        </authorList>
    </citation>
    <scope>NUCLEOTIDE SEQUENCE [MRNA]</scope>
    <source>
        <strain>Isolate P3A</strain>
    </source>
</reference>
<name>RS26_BRUPA</name>
<organism>
    <name type="scientific">Brugia pahangi</name>
    <name type="common">Filarial nematode worm</name>
    <dbReference type="NCBI Taxonomy" id="6280"/>
    <lineage>
        <taxon>Eukaryota</taxon>
        <taxon>Metazoa</taxon>
        <taxon>Ecdysozoa</taxon>
        <taxon>Nematoda</taxon>
        <taxon>Chromadorea</taxon>
        <taxon>Rhabditida</taxon>
        <taxon>Spirurina</taxon>
        <taxon>Spiruromorpha</taxon>
        <taxon>Filarioidea</taxon>
        <taxon>Onchocercidae</taxon>
        <taxon>Brugia</taxon>
    </lineage>
</organism>
<protein>
    <recommendedName>
        <fullName evidence="1">Small ribosomal subunit protein eS26</fullName>
    </recommendedName>
    <alternativeName>
        <fullName>40S ribosomal protein S26</fullName>
    </alternativeName>
</protein>
<accession>P41959</accession>
<sequence length="83" mass="9351">MTTKRRNHGRNKKGRGHVRPIRCTNCGRCAPKDKAIKKFVVRNIVVAAAVRDISDASAYDSYALPKLYHKLHYCVSCAIHSKV</sequence>